<accession>Q1MRF1</accession>
<name>F16PA_LAWIP</name>
<keyword id="KW-0119">Carbohydrate metabolism</keyword>
<keyword id="KW-0963">Cytoplasm</keyword>
<keyword id="KW-0378">Hydrolase</keyword>
<keyword id="KW-0460">Magnesium</keyword>
<keyword id="KW-0479">Metal-binding</keyword>
<keyword id="KW-1185">Reference proteome</keyword>
<dbReference type="EC" id="3.1.3.11" evidence="1"/>
<dbReference type="EMBL" id="AM180252">
    <property type="protein sequence ID" value="CAJ54425.1"/>
    <property type="molecule type" value="Genomic_DNA"/>
</dbReference>
<dbReference type="RefSeq" id="WP_011526454.1">
    <property type="nucleotide sequence ID" value="NC_008011.1"/>
</dbReference>
<dbReference type="SMR" id="Q1MRF1"/>
<dbReference type="STRING" id="363253.LI0369"/>
<dbReference type="KEGG" id="lip:LI0369"/>
<dbReference type="eggNOG" id="COG0158">
    <property type="taxonomic scope" value="Bacteria"/>
</dbReference>
<dbReference type="HOGENOM" id="CLU_039977_2_2_7"/>
<dbReference type="OrthoDB" id="9806756at2"/>
<dbReference type="UniPathway" id="UPA00138"/>
<dbReference type="Proteomes" id="UP000002430">
    <property type="component" value="Chromosome"/>
</dbReference>
<dbReference type="GO" id="GO:0005829">
    <property type="term" value="C:cytosol"/>
    <property type="evidence" value="ECO:0007669"/>
    <property type="project" value="TreeGrafter"/>
</dbReference>
<dbReference type="GO" id="GO:0042132">
    <property type="term" value="F:fructose 1,6-bisphosphate 1-phosphatase activity"/>
    <property type="evidence" value="ECO:0007669"/>
    <property type="project" value="UniProtKB-UniRule"/>
</dbReference>
<dbReference type="GO" id="GO:0000287">
    <property type="term" value="F:magnesium ion binding"/>
    <property type="evidence" value="ECO:0007669"/>
    <property type="project" value="UniProtKB-UniRule"/>
</dbReference>
<dbReference type="GO" id="GO:0030388">
    <property type="term" value="P:fructose 1,6-bisphosphate metabolic process"/>
    <property type="evidence" value="ECO:0007669"/>
    <property type="project" value="TreeGrafter"/>
</dbReference>
<dbReference type="GO" id="GO:0006002">
    <property type="term" value="P:fructose 6-phosphate metabolic process"/>
    <property type="evidence" value="ECO:0007669"/>
    <property type="project" value="TreeGrafter"/>
</dbReference>
<dbReference type="GO" id="GO:0006000">
    <property type="term" value="P:fructose metabolic process"/>
    <property type="evidence" value="ECO:0007669"/>
    <property type="project" value="TreeGrafter"/>
</dbReference>
<dbReference type="GO" id="GO:0006094">
    <property type="term" value="P:gluconeogenesis"/>
    <property type="evidence" value="ECO:0007669"/>
    <property type="project" value="UniProtKB-UniRule"/>
</dbReference>
<dbReference type="GO" id="GO:0005986">
    <property type="term" value="P:sucrose biosynthetic process"/>
    <property type="evidence" value="ECO:0007669"/>
    <property type="project" value="TreeGrafter"/>
</dbReference>
<dbReference type="CDD" id="cd00354">
    <property type="entry name" value="FBPase"/>
    <property type="match status" value="1"/>
</dbReference>
<dbReference type="FunFam" id="3.30.540.10:FF:000002">
    <property type="entry name" value="Fructose-1,6-bisphosphatase class 1"/>
    <property type="match status" value="1"/>
</dbReference>
<dbReference type="Gene3D" id="3.40.190.80">
    <property type="match status" value="1"/>
</dbReference>
<dbReference type="Gene3D" id="3.30.540.10">
    <property type="entry name" value="Fructose-1,6-Bisphosphatase, subunit A, domain 1"/>
    <property type="match status" value="1"/>
</dbReference>
<dbReference type="HAMAP" id="MF_01855">
    <property type="entry name" value="FBPase_class1"/>
    <property type="match status" value="1"/>
</dbReference>
<dbReference type="InterPro" id="IPR044015">
    <property type="entry name" value="FBPase_C_dom"/>
</dbReference>
<dbReference type="InterPro" id="IPR000146">
    <property type="entry name" value="FBPase_class-1"/>
</dbReference>
<dbReference type="InterPro" id="IPR033391">
    <property type="entry name" value="FBPase_N"/>
</dbReference>
<dbReference type="InterPro" id="IPR028343">
    <property type="entry name" value="FBPtase"/>
</dbReference>
<dbReference type="NCBIfam" id="NF006778">
    <property type="entry name" value="PRK09293.1-1"/>
    <property type="match status" value="1"/>
</dbReference>
<dbReference type="PANTHER" id="PTHR11556">
    <property type="entry name" value="FRUCTOSE-1,6-BISPHOSPHATASE-RELATED"/>
    <property type="match status" value="1"/>
</dbReference>
<dbReference type="PANTHER" id="PTHR11556:SF35">
    <property type="entry name" value="SEDOHEPTULOSE-1,7-BISPHOSPHATASE, CHLOROPLASTIC"/>
    <property type="match status" value="1"/>
</dbReference>
<dbReference type="Pfam" id="PF00316">
    <property type="entry name" value="FBPase"/>
    <property type="match status" value="1"/>
</dbReference>
<dbReference type="Pfam" id="PF18913">
    <property type="entry name" value="FBPase_C"/>
    <property type="match status" value="1"/>
</dbReference>
<dbReference type="PIRSF" id="PIRSF500210">
    <property type="entry name" value="FBPtase"/>
    <property type="match status" value="1"/>
</dbReference>
<dbReference type="PIRSF" id="PIRSF000904">
    <property type="entry name" value="FBPtase_SBPase"/>
    <property type="match status" value="1"/>
</dbReference>
<dbReference type="PRINTS" id="PR00115">
    <property type="entry name" value="F16BPHPHTASE"/>
</dbReference>
<dbReference type="SUPFAM" id="SSF56655">
    <property type="entry name" value="Carbohydrate phosphatase"/>
    <property type="match status" value="1"/>
</dbReference>
<proteinExistence type="inferred from homology"/>
<protein>
    <recommendedName>
        <fullName evidence="1">Fructose-1,6-bisphosphatase class 1</fullName>
        <shortName evidence="1">FBPase class 1</shortName>
        <ecNumber evidence="1">3.1.3.11</ecNumber>
    </recommendedName>
    <alternativeName>
        <fullName evidence="1">D-fructose-1,6-bisphosphate 1-phosphohydrolase class 1</fullName>
    </alternativeName>
</protein>
<reference key="1">
    <citation type="submission" date="2005-11" db="EMBL/GenBank/DDBJ databases">
        <title>The complete genome sequence of Lawsonia intracellularis: the causative agent of proliferative enteropathy.</title>
        <authorList>
            <person name="Kaur K."/>
            <person name="Zhang Q."/>
            <person name="Beckler D."/>
            <person name="Munir S."/>
            <person name="Li L."/>
            <person name="Kinsley K."/>
            <person name="Herron L."/>
            <person name="Peterson A."/>
            <person name="May B."/>
            <person name="Singh S."/>
            <person name="Gebhart C."/>
            <person name="Kapur V."/>
        </authorList>
    </citation>
    <scope>NUCLEOTIDE SEQUENCE [LARGE SCALE GENOMIC DNA]</scope>
    <source>
        <strain>PHE/MN1-00</strain>
    </source>
</reference>
<comment type="catalytic activity">
    <reaction evidence="1">
        <text>beta-D-fructose 1,6-bisphosphate + H2O = beta-D-fructose 6-phosphate + phosphate</text>
        <dbReference type="Rhea" id="RHEA:11064"/>
        <dbReference type="ChEBI" id="CHEBI:15377"/>
        <dbReference type="ChEBI" id="CHEBI:32966"/>
        <dbReference type="ChEBI" id="CHEBI:43474"/>
        <dbReference type="ChEBI" id="CHEBI:57634"/>
        <dbReference type="EC" id="3.1.3.11"/>
    </reaction>
</comment>
<comment type="cofactor">
    <cofactor evidence="1">
        <name>Mg(2+)</name>
        <dbReference type="ChEBI" id="CHEBI:18420"/>
    </cofactor>
    <text evidence="1">Binds 2 magnesium ions per subunit.</text>
</comment>
<comment type="pathway">
    <text evidence="1">Carbohydrate biosynthesis; gluconeogenesis.</text>
</comment>
<comment type="subunit">
    <text evidence="1">Homotetramer.</text>
</comment>
<comment type="subcellular location">
    <subcellularLocation>
        <location evidence="1">Cytoplasm</location>
    </subcellularLocation>
</comment>
<comment type="similarity">
    <text evidence="1">Belongs to the FBPase class 1 family.</text>
</comment>
<feature type="chain" id="PRO_0000364583" description="Fructose-1,6-bisphosphatase class 1">
    <location>
        <begin position="1"/>
        <end position="335"/>
    </location>
</feature>
<feature type="binding site" evidence="1">
    <location>
        <position position="92"/>
    </location>
    <ligand>
        <name>Mg(2+)</name>
        <dbReference type="ChEBI" id="CHEBI:18420"/>
        <label>1</label>
    </ligand>
</feature>
<feature type="binding site" evidence="1">
    <location>
        <position position="114"/>
    </location>
    <ligand>
        <name>Mg(2+)</name>
        <dbReference type="ChEBI" id="CHEBI:18420"/>
        <label>1</label>
    </ligand>
</feature>
<feature type="binding site" evidence="1">
    <location>
        <position position="114"/>
    </location>
    <ligand>
        <name>Mg(2+)</name>
        <dbReference type="ChEBI" id="CHEBI:18420"/>
        <label>2</label>
    </ligand>
</feature>
<feature type="binding site" evidence="1">
    <location>
        <position position="116"/>
    </location>
    <ligand>
        <name>Mg(2+)</name>
        <dbReference type="ChEBI" id="CHEBI:18420"/>
        <label>1</label>
    </ligand>
</feature>
<feature type="binding site" evidence="1">
    <location>
        <begin position="117"/>
        <end position="120"/>
    </location>
    <ligand>
        <name>substrate</name>
    </ligand>
</feature>
<feature type="binding site" evidence="1">
    <location>
        <position position="117"/>
    </location>
    <ligand>
        <name>Mg(2+)</name>
        <dbReference type="ChEBI" id="CHEBI:18420"/>
        <label>2</label>
    </ligand>
</feature>
<feature type="binding site" evidence="1">
    <location>
        <position position="210"/>
    </location>
    <ligand>
        <name>substrate</name>
    </ligand>
</feature>
<feature type="binding site" evidence="1">
    <location>
        <position position="242"/>
    </location>
    <ligand>
        <name>substrate</name>
    </ligand>
</feature>
<feature type="binding site" evidence="1">
    <location>
        <position position="274"/>
    </location>
    <ligand>
        <name>substrate</name>
    </ligand>
</feature>
<feature type="binding site" evidence="1">
    <location>
        <position position="280"/>
    </location>
    <ligand>
        <name>Mg(2+)</name>
        <dbReference type="ChEBI" id="CHEBI:18420"/>
        <label>2</label>
    </ligand>
</feature>
<sequence length="335" mass="36975">MSSEVTVTEHLLLQQQRAPQATGHFTSLFHDLILSAKIISRSVNKAGLLDVLGGTGDINIQGEKVQKLDEFADKVLLYRMERSGVLCAMASEEHAELIKVSAAFPRGDYILIFDPLDGSSNIDVNINVGTIFSILRRKPGKTGDVELDEVLQPGSEQIAAGYFLYGTSTMLVYTAGQGVHGFTLDPSVGEFLLSHTDIKIPDEGFIYSVNEGYWDYWDTPTREAVMYFKQPSSKEKVRSARYVGSLVADFHRTLLYGGVFMYPSDNRKGKMHGKLRYLCEASPLAFVAENAGGAATDGLYRTLDYVPLSLHNRVPLVIGSKKDVEAVANIYAKYK</sequence>
<gene>
    <name evidence="1" type="primary">fbp</name>
    <name type="ordered locus">LI0369</name>
</gene>
<evidence type="ECO:0000255" key="1">
    <source>
        <dbReference type="HAMAP-Rule" id="MF_01855"/>
    </source>
</evidence>
<organism>
    <name type="scientific">Lawsonia intracellularis (strain PHE/MN1-00)</name>
    <dbReference type="NCBI Taxonomy" id="363253"/>
    <lineage>
        <taxon>Bacteria</taxon>
        <taxon>Pseudomonadati</taxon>
        <taxon>Thermodesulfobacteriota</taxon>
        <taxon>Desulfovibrionia</taxon>
        <taxon>Desulfovibrionales</taxon>
        <taxon>Desulfovibrionaceae</taxon>
        <taxon>Lawsonia</taxon>
    </lineage>
</organism>